<comment type="function">
    <text evidence="1">Involved in the biosynthesis of the chorismate, which leads to the biosynthesis of aromatic amino acids. Catalyzes the reversible NADPH linked reduction of 3-dehydroshikimate (DHSA) to yield shikimate (SA).</text>
</comment>
<comment type="catalytic activity">
    <reaction evidence="1">
        <text>shikimate + NADP(+) = 3-dehydroshikimate + NADPH + H(+)</text>
        <dbReference type="Rhea" id="RHEA:17737"/>
        <dbReference type="ChEBI" id="CHEBI:15378"/>
        <dbReference type="ChEBI" id="CHEBI:16630"/>
        <dbReference type="ChEBI" id="CHEBI:36208"/>
        <dbReference type="ChEBI" id="CHEBI:57783"/>
        <dbReference type="ChEBI" id="CHEBI:58349"/>
        <dbReference type="EC" id="1.1.1.25"/>
    </reaction>
</comment>
<comment type="pathway">
    <text evidence="1">Metabolic intermediate biosynthesis; chorismate biosynthesis; chorismate from D-erythrose 4-phosphate and phosphoenolpyruvate: step 4/7.</text>
</comment>
<comment type="subunit">
    <text evidence="1">Homodimer.</text>
</comment>
<comment type="similarity">
    <text evidence="1">Belongs to the shikimate dehydrogenase family.</text>
</comment>
<reference key="1">
    <citation type="submission" date="2006-10" db="EMBL/GenBank/DDBJ databases">
        <title>Complete sequence of chromosome of Pelobacter propionicus DSM 2379.</title>
        <authorList>
            <consortium name="US DOE Joint Genome Institute"/>
            <person name="Copeland A."/>
            <person name="Lucas S."/>
            <person name="Lapidus A."/>
            <person name="Barry K."/>
            <person name="Detter J.C."/>
            <person name="Glavina del Rio T."/>
            <person name="Hammon N."/>
            <person name="Israni S."/>
            <person name="Dalin E."/>
            <person name="Tice H."/>
            <person name="Pitluck S."/>
            <person name="Saunders E."/>
            <person name="Brettin T."/>
            <person name="Bruce D."/>
            <person name="Han C."/>
            <person name="Tapia R."/>
            <person name="Schmutz J."/>
            <person name="Larimer F."/>
            <person name="Land M."/>
            <person name="Hauser L."/>
            <person name="Kyrpides N."/>
            <person name="Kim E."/>
            <person name="Lovley D."/>
            <person name="Richardson P."/>
        </authorList>
    </citation>
    <scope>NUCLEOTIDE SEQUENCE [LARGE SCALE GENOMIC DNA]</scope>
    <source>
        <strain>DSM 2379 / NBRC 103807 / OttBd1</strain>
    </source>
</reference>
<feature type="chain" id="PRO_1000058666" description="Shikimate dehydrogenase (NADP(+))">
    <location>
        <begin position="1"/>
        <end position="277"/>
    </location>
</feature>
<feature type="active site" description="Proton acceptor" evidence="1">
    <location>
        <position position="71"/>
    </location>
</feature>
<feature type="binding site" evidence="1">
    <location>
        <begin position="20"/>
        <end position="22"/>
    </location>
    <ligand>
        <name>shikimate</name>
        <dbReference type="ChEBI" id="CHEBI:36208"/>
    </ligand>
</feature>
<feature type="binding site" evidence="1">
    <location>
        <position position="67"/>
    </location>
    <ligand>
        <name>shikimate</name>
        <dbReference type="ChEBI" id="CHEBI:36208"/>
    </ligand>
</feature>
<feature type="binding site" evidence="1">
    <location>
        <position position="83"/>
    </location>
    <ligand>
        <name>NADP(+)</name>
        <dbReference type="ChEBI" id="CHEBI:58349"/>
    </ligand>
</feature>
<feature type="binding site" evidence="1">
    <location>
        <position position="92"/>
    </location>
    <ligand>
        <name>shikimate</name>
        <dbReference type="ChEBI" id="CHEBI:36208"/>
    </ligand>
</feature>
<feature type="binding site" evidence="1">
    <location>
        <position position="107"/>
    </location>
    <ligand>
        <name>shikimate</name>
        <dbReference type="ChEBI" id="CHEBI:36208"/>
    </ligand>
</feature>
<feature type="binding site" evidence="1">
    <location>
        <begin position="131"/>
        <end position="135"/>
    </location>
    <ligand>
        <name>NADP(+)</name>
        <dbReference type="ChEBI" id="CHEBI:58349"/>
    </ligand>
</feature>
<feature type="binding site" evidence="1">
    <location>
        <position position="219"/>
    </location>
    <ligand>
        <name>NADP(+)</name>
        <dbReference type="ChEBI" id="CHEBI:58349"/>
    </ligand>
</feature>
<feature type="binding site" evidence="1">
    <location>
        <position position="221"/>
    </location>
    <ligand>
        <name>shikimate</name>
        <dbReference type="ChEBI" id="CHEBI:36208"/>
    </ligand>
</feature>
<feature type="binding site" evidence="1">
    <location>
        <position position="242"/>
    </location>
    <ligand>
        <name>NADP(+)</name>
        <dbReference type="ChEBI" id="CHEBI:58349"/>
    </ligand>
</feature>
<protein>
    <recommendedName>
        <fullName evidence="1">Shikimate dehydrogenase (NADP(+))</fullName>
        <shortName evidence="1">SDH</shortName>
        <ecNumber evidence="1">1.1.1.25</ecNumber>
    </recommendedName>
</protein>
<evidence type="ECO:0000255" key="1">
    <source>
        <dbReference type="HAMAP-Rule" id="MF_00222"/>
    </source>
</evidence>
<accession>A1ARJ6</accession>
<gene>
    <name evidence="1" type="primary">aroE</name>
    <name type="ordered locus">Ppro_2359</name>
</gene>
<keyword id="KW-0028">Amino-acid biosynthesis</keyword>
<keyword id="KW-0057">Aromatic amino acid biosynthesis</keyword>
<keyword id="KW-0521">NADP</keyword>
<keyword id="KW-0560">Oxidoreductase</keyword>
<keyword id="KW-1185">Reference proteome</keyword>
<proteinExistence type="inferred from homology"/>
<sequence>MNPCSTPSLYGVIGYPLGHSLSPLLHNTAFRELGIPGVLLPWSIEPERLPAFIQSVRLLNIRGACVTIPHKQSIIPLLDRVTDRVKALGAANTLYWDGDLLCGDNTDILGFMSPLQADPPSAEQTRVLVLGAGGVARAAVAGLKSLGLNQITITDIVDASSATLAETFDLKTIPWSQRSEVDAHILINTTPLGMKGKFEEESPYPTEALAARQGIAYDIVYTPFVTRFLREARAAGWKTIGGLEMFISQADHQFLTWTGRNLPQAAKQAVIDALTAT</sequence>
<dbReference type="EC" id="1.1.1.25" evidence="1"/>
<dbReference type="EMBL" id="CP000482">
    <property type="protein sequence ID" value="ABK99966.1"/>
    <property type="molecule type" value="Genomic_DNA"/>
</dbReference>
<dbReference type="RefSeq" id="WP_011736222.1">
    <property type="nucleotide sequence ID" value="NC_008609.1"/>
</dbReference>
<dbReference type="SMR" id="A1ARJ6"/>
<dbReference type="STRING" id="338966.Ppro_2359"/>
<dbReference type="KEGG" id="ppd:Ppro_2359"/>
<dbReference type="eggNOG" id="COG0169">
    <property type="taxonomic scope" value="Bacteria"/>
</dbReference>
<dbReference type="HOGENOM" id="CLU_044063_4_1_7"/>
<dbReference type="OrthoDB" id="9792692at2"/>
<dbReference type="UniPathway" id="UPA00053">
    <property type="reaction ID" value="UER00087"/>
</dbReference>
<dbReference type="Proteomes" id="UP000006732">
    <property type="component" value="Chromosome"/>
</dbReference>
<dbReference type="GO" id="GO:0005829">
    <property type="term" value="C:cytosol"/>
    <property type="evidence" value="ECO:0007669"/>
    <property type="project" value="TreeGrafter"/>
</dbReference>
<dbReference type="GO" id="GO:0050661">
    <property type="term" value="F:NADP binding"/>
    <property type="evidence" value="ECO:0007669"/>
    <property type="project" value="TreeGrafter"/>
</dbReference>
<dbReference type="GO" id="GO:0004764">
    <property type="term" value="F:shikimate 3-dehydrogenase (NADP+) activity"/>
    <property type="evidence" value="ECO:0007669"/>
    <property type="project" value="UniProtKB-UniRule"/>
</dbReference>
<dbReference type="GO" id="GO:0008652">
    <property type="term" value="P:amino acid biosynthetic process"/>
    <property type="evidence" value="ECO:0007669"/>
    <property type="project" value="UniProtKB-KW"/>
</dbReference>
<dbReference type="GO" id="GO:0009073">
    <property type="term" value="P:aromatic amino acid family biosynthetic process"/>
    <property type="evidence" value="ECO:0007669"/>
    <property type="project" value="UniProtKB-KW"/>
</dbReference>
<dbReference type="GO" id="GO:0009423">
    <property type="term" value="P:chorismate biosynthetic process"/>
    <property type="evidence" value="ECO:0007669"/>
    <property type="project" value="UniProtKB-UniRule"/>
</dbReference>
<dbReference type="GO" id="GO:0019632">
    <property type="term" value="P:shikimate metabolic process"/>
    <property type="evidence" value="ECO:0007669"/>
    <property type="project" value="TreeGrafter"/>
</dbReference>
<dbReference type="CDD" id="cd01065">
    <property type="entry name" value="NAD_bind_Shikimate_DH"/>
    <property type="match status" value="1"/>
</dbReference>
<dbReference type="Gene3D" id="3.40.50.10860">
    <property type="entry name" value="Leucine Dehydrogenase, chain A, domain 1"/>
    <property type="match status" value="1"/>
</dbReference>
<dbReference type="Gene3D" id="3.40.50.720">
    <property type="entry name" value="NAD(P)-binding Rossmann-like Domain"/>
    <property type="match status" value="1"/>
</dbReference>
<dbReference type="HAMAP" id="MF_00222">
    <property type="entry name" value="Shikimate_DH_AroE"/>
    <property type="match status" value="1"/>
</dbReference>
<dbReference type="InterPro" id="IPR046346">
    <property type="entry name" value="Aminoacid_DH-like_N_sf"/>
</dbReference>
<dbReference type="InterPro" id="IPR036291">
    <property type="entry name" value="NAD(P)-bd_dom_sf"/>
</dbReference>
<dbReference type="InterPro" id="IPR013708">
    <property type="entry name" value="Shikimate_DH-bd_N"/>
</dbReference>
<dbReference type="InterPro" id="IPR022893">
    <property type="entry name" value="Shikimate_DH_fam"/>
</dbReference>
<dbReference type="PANTHER" id="PTHR21089:SF1">
    <property type="entry name" value="BIFUNCTIONAL 3-DEHYDROQUINATE DEHYDRATASE_SHIKIMATE DEHYDROGENASE, CHLOROPLASTIC"/>
    <property type="match status" value="1"/>
</dbReference>
<dbReference type="PANTHER" id="PTHR21089">
    <property type="entry name" value="SHIKIMATE DEHYDROGENASE"/>
    <property type="match status" value="1"/>
</dbReference>
<dbReference type="Pfam" id="PF08501">
    <property type="entry name" value="Shikimate_dh_N"/>
    <property type="match status" value="1"/>
</dbReference>
<dbReference type="SUPFAM" id="SSF53223">
    <property type="entry name" value="Aminoacid dehydrogenase-like, N-terminal domain"/>
    <property type="match status" value="1"/>
</dbReference>
<dbReference type="SUPFAM" id="SSF51735">
    <property type="entry name" value="NAD(P)-binding Rossmann-fold domains"/>
    <property type="match status" value="1"/>
</dbReference>
<name>AROE_PELPD</name>
<organism>
    <name type="scientific">Pelobacter propionicus (strain DSM 2379 / NBRC 103807 / OttBd1)</name>
    <dbReference type="NCBI Taxonomy" id="338966"/>
    <lineage>
        <taxon>Bacteria</taxon>
        <taxon>Pseudomonadati</taxon>
        <taxon>Thermodesulfobacteriota</taxon>
        <taxon>Desulfuromonadia</taxon>
        <taxon>Desulfuromonadales</taxon>
        <taxon>Desulfuromonadaceae</taxon>
        <taxon>Pelobacter</taxon>
    </lineage>
</organism>